<evidence type="ECO:0000250" key="1"/>
<evidence type="ECO:0000250" key="2">
    <source>
        <dbReference type="UniProtKB" id="P04792"/>
    </source>
</evidence>
<evidence type="ECO:0000250" key="3">
    <source>
        <dbReference type="UniProtKB" id="P14602"/>
    </source>
</evidence>
<evidence type="ECO:0000250" key="4">
    <source>
        <dbReference type="UniProtKB" id="P42930"/>
    </source>
</evidence>
<evidence type="ECO:0000255" key="5">
    <source>
        <dbReference type="PROSITE-ProRule" id="PRU00285"/>
    </source>
</evidence>
<protein>
    <recommendedName>
        <fullName>Heat shock protein beta-1</fullName>
        <shortName>HspB1</shortName>
    </recommendedName>
    <alternativeName>
        <fullName>Heat shock 27 kDa protein</fullName>
        <shortName>HSP 27</shortName>
    </alternativeName>
</protein>
<comment type="function">
    <text evidence="2">Small heat shock protein which functions as a molecular chaperone probably maintaining denatured proteins in a folding-competent state. Plays a role in stress resistance and actin organization. Through its molecular chaperone activity may regulate numerous biological processes including the phosphorylation and the axonal transport of neurofilament proteins.</text>
</comment>
<comment type="subunit">
    <text evidence="2">Homooligomer. Homodimer; becomes monomeric upon activation. Heterooligomer; with HSPB6. Associates with alpha- and beta-tubulin. Interacts with TGFB1I1. Interacts with CRYAB. Interacts with HSPB8. Interacts with HSPBAP1.</text>
</comment>
<comment type="subcellular location">
    <subcellularLocation>
        <location evidence="2">Cytoplasm</location>
    </subcellularLocation>
    <subcellularLocation>
        <location evidence="2">Nucleus</location>
    </subcellularLocation>
    <subcellularLocation>
        <location evidence="2">Cytoplasm</location>
        <location evidence="2">Cytoskeleton</location>
        <location evidence="2">Spindle</location>
    </subcellularLocation>
    <text evidence="2">Cytoplasmic in interphase cells. Colocalizes with mitotic spindles in mitotic cells. Translocates to the nucleus during heat shock and resides in sub-nuclear structures known as SC35 speckles or nuclear splicing speckles.</text>
</comment>
<comment type="PTM">
    <text evidence="2">Phosphorylated upon exposure to protein kinase C activators and heat shock. Phosphorylation by MAPKAPK2 and MAPKAPK3 in response to stress dissociates HSPB1 from large small heat-shock protein (sHsps) oligomers and impairs its chaperone activity and ability to protect against oxidative stress effectively. Phosphorylation by MAPKAPK5 in response to PKA stimulation induces F-actin rearrangement.</text>
</comment>
<comment type="similarity">
    <text evidence="5">Belongs to the small heat shock protein (HSP20) family.</text>
</comment>
<feature type="chain" id="PRO_0000125924" description="Heat shock protein beta-1">
    <location>
        <begin position="1"/>
        <end position="201"/>
    </location>
</feature>
<feature type="domain" description="sHSP" evidence="5">
    <location>
        <begin position="72"/>
        <end position="180"/>
    </location>
</feature>
<feature type="region of interest" description="Interaction with TGFB1I1" evidence="1">
    <location>
        <begin position="68"/>
        <end position="201"/>
    </location>
</feature>
<feature type="modified residue" description="Omega-N-methylarginine" evidence="2">
    <location>
        <position position="12"/>
    </location>
</feature>
<feature type="modified residue" description="Phosphoserine; by MAPKAPK2 and MAPKAPK3" evidence="3">
    <location>
        <position position="15"/>
    </location>
</feature>
<feature type="modified residue" description="Phosphoserine" evidence="4">
    <location>
        <position position="27"/>
    </location>
</feature>
<feature type="modified residue" description="Phosphoserine; by MAPKAPK2, MAPKAPK3 and MAPKAPK5" evidence="2">
    <location>
        <position position="74"/>
    </location>
</feature>
<feature type="modified residue" description="Phosphoserine; by MAPKAPK2, MAPKAPK3 and MAPKAPK5" evidence="3">
    <location>
        <position position="78"/>
    </location>
</feature>
<feature type="modified residue" description="Phosphoserine" evidence="2">
    <location>
        <position position="79"/>
    </location>
</feature>
<feature type="modified residue" description="Phosphoserine" evidence="2">
    <location>
        <position position="82"/>
    </location>
</feature>
<feature type="modified residue" description="Phosphoserine" evidence="2">
    <location>
        <position position="94"/>
    </location>
</feature>
<feature type="modified residue" description="N6-acetyllysine" evidence="2">
    <location>
        <position position="119"/>
    </location>
</feature>
<feature type="modified residue" description="Phosphothreonine" evidence="2">
    <location>
        <position position="170"/>
    </location>
</feature>
<feature type="modified residue" description="Phosphoserine" evidence="2">
    <location>
        <position position="172"/>
    </location>
</feature>
<feature type="modified residue" description="Phosphoserine" evidence="2">
    <location>
        <position position="195"/>
    </location>
</feature>
<gene>
    <name type="primary">HSPB1</name>
    <name type="synonym">HSP27</name>
</gene>
<accession>Q3T149</accession>
<organism>
    <name type="scientific">Bos taurus</name>
    <name type="common">Bovine</name>
    <dbReference type="NCBI Taxonomy" id="9913"/>
    <lineage>
        <taxon>Eukaryota</taxon>
        <taxon>Metazoa</taxon>
        <taxon>Chordata</taxon>
        <taxon>Craniata</taxon>
        <taxon>Vertebrata</taxon>
        <taxon>Euteleostomi</taxon>
        <taxon>Mammalia</taxon>
        <taxon>Eutheria</taxon>
        <taxon>Laurasiatheria</taxon>
        <taxon>Artiodactyla</taxon>
        <taxon>Ruminantia</taxon>
        <taxon>Pecora</taxon>
        <taxon>Bovidae</taxon>
        <taxon>Bovinae</taxon>
        <taxon>Bos</taxon>
    </lineage>
</organism>
<name>HSPB1_BOVIN</name>
<sequence length="201" mass="22393">MAERRVPFSLLRGPSWDPFRDWYPAHSRLFDQAFGLPRLPEEWSQWLSHSGWPGYVRALPAAAIEGPAYNRALSRQLSSGVSEIQQTADRWRVSLDVNHFAPEELTVKTKDGVVEITGKHEERQDEHGYISRCFTRKYTLPPGVDPTLVSSSLSPEGTLTVEAPLPKSATQSAEITIPVTFQARAQLGGPEAGKSEQPENK</sequence>
<dbReference type="EMBL" id="BC102129">
    <property type="protein sequence ID" value="AAI02130.1"/>
    <property type="molecule type" value="mRNA"/>
</dbReference>
<dbReference type="RefSeq" id="NP_001020740.2">
    <property type="nucleotide sequence ID" value="NM_001025569.2"/>
</dbReference>
<dbReference type="RefSeq" id="XP_005225172.1">
    <property type="nucleotide sequence ID" value="XM_005225115.1"/>
</dbReference>
<dbReference type="SMR" id="Q3T149"/>
<dbReference type="FunCoup" id="Q3T149">
    <property type="interactions" value="556"/>
</dbReference>
<dbReference type="STRING" id="9913.ENSBTAP00000041898"/>
<dbReference type="iPTMnet" id="Q3T149"/>
<dbReference type="PaxDb" id="9913-ENSBTAP00000015883"/>
<dbReference type="PeptideAtlas" id="Q3T149"/>
<dbReference type="Ensembl" id="ENSBTAT00000044397.3">
    <property type="protein sequence ID" value="ENSBTAP00000041898.3"/>
    <property type="gene ID" value="ENSBTAG00000011969.7"/>
</dbReference>
<dbReference type="GeneID" id="516099"/>
<dbReference type="VEuPathDB" id="HostDB:ENSBTAG00000011969"/>
<dbReference type="eggNOG" id="KOG3591">
    <property type="taxonomic scope" value="Eukaryota"/>
</dbReference>
<dbReference type="GeneTree" id="ENSGT00940000155882"/>
<dbReference type="InParanoid" id="Q3T149"/>
<dbReference type="OMA" id="QWPSHTS"/>
<dbReference type="OrthoDB" id="10060792at2759"/>
<dbReference type="Reactome" id="R-BTA-4420097">
    <property type="pathway name" value="VEGFA-VEGFR2 Pathway"/>
</dbReference>
<dbReference type="Reactome" id="R-BTA-450408">
    <property type="pathway name" value="AUF1 (hnRNP D0) binds and destabilizes mRNA"/>
</dbReference>
<dbReference type="Reactome" id="R-BTA-5687128">
    <property type="pathway name" value="MAPK6/MAPK4 signaling"/>
</dbReference>
<dbReference type="Reactome" id="R-BTA-9009391">
    <property type="pathway name" value="Extra-nuclear estrogen signaling"/>
</dbReference>
<dbReference type="Proteomes" id="UP000009136">
    <property type="component" value="Chromosome 25"/>
</dbReference>
<dbReference type="Bgee" id="ENSBTAG00000011969">
    <property type="expression patterns" value="Expressed in bone marrow and 104 other cell types or tissues"/>
</dbReference>
<dbReference type="GO" id="GO:1904115">
    <property type="term" value="C:axon cytoplasm"/>
    <property type="evidence" value="ECO:0007669"/>
    <property type="project" value="GOC"/>
</dbReference>
<dbReference type="GO" id="GO:0001533">
    <property type="term" value="C:cornified envelope"/>
    <property type="evidence" value="ECO:0007669"/>
    <property type="project" value="Ensembl"/>
</dbReference>
<dbReference type="GO" id="GO:0005737">
    <property type="term" value="C:cytoplasm"/>
    <property type="evidence" value="ECO:0000250"/>
    <property type="project" value="UniProtKB"/>
</dbReference>
<dbReference type="GO" id="GO:0005634">
    <property type="term" value="C:nucleus"/>
    <property type="evidence" value="ECO:0000250"/>
    <property type="project" value="UniProtKB"/>
</dbReference>
<dbReference type="GO" id="GO:0005819">
    <property type="term" value="C:spindle"/>
    <property type="evidence" value="ECO:0007669"/>
    <property type="project" value="UniProtKB-SubCell"/>
</dbReference>
<dbReference type="GO" id="GO:0030018">
    <property type="term" value="C:Z disc"/>
    <property type="evidence" value="ECO:0007669"/>
    <property type="project" value="Ensembl"/>
</dbReference>
<dbReference type="GO" id="GO:0042802">
    <property type="term" value="F:identical protein binding"/>
    <property type="evidence" value="ECO:0000250"/>
    <property type="project" value="UniProtKB"/>
</dbReference>
<dbReference type="GO" id="GO:0044183">
    <property type="term" value="F:protein folding chaperone"/>
    <property type="evidence" value="ECO:0000250"/>
    <property type="project" value="UniProtKB"/>
</dbReference>
<dbReference type="GO" id="GO:0042803">
    <property type="term" value="F:protein homodimerization activity"/>
    <property type="evidence" value="ECO:0000250"/>
    <property type="project" value="UniProtKB"/>
</dbReference>
<dbReference type="GO" id="GO:0005080">
    <property type="term" value="F:protein kinase C binding"/>
    <property type="evidence" value="ECO:0007669"/>
    <property type="project" value="Ensembl"/>
</dbReference>
<dbReference type="GO" id="GO:0008426">
    <property type="term" value="F:protein kinase C inhibitor activity"/>
    <property type="evidence" value="ECO:0007669"/>
    <property type="project" value="Ensembl"/>
</dbReference>
<dbReference type="GO" id="GO:0061629">
    <property type="term" value="F:RNA polymerase II-specific DNA-binding transcription factor binding"/>
    <property type="evidence" value="ECO:0007669"/>
    <property type="project" value="Ensembl"/>
</dbReference>
<dbReference type="GO" id="GO:0051082">
    <property type="term" value="F:unfolded protein binding"/>
    <property type="evidence" value="ECO:0000318"/>
    <property type="project" value="GO_Central"/>
</dbReference>
<dbReference type="GO" id="GO:0099641">
    <property type="term" value="P:anterograde axonal protein transport"/>
    <property type="evidence" value="ECO:0000250"/>
    <property type="project" value="UniProtKB"/>
</dbReference>
<dbReference type="GO" id="GO:0035924">
    <property type="term" value="P:cellular response to vascular endothelial growth factor stimulus"/>
    <property type="evidence" value="ECO:0007669"/>
    <property type="project" value="Ensembl"/>
</dbReference>
<dbReference type="GO" id="GO:0061077">
    <property type="term" value="P:chaperone-mediated protein folding"/>
    <property type="evidence" value="ECO:0000250"/>
    <property type="project" value="UniProtKB"/>
</dbReference>
<dbReference type="GO" id="GO:0035556">
    <property type="term" value="P:intracellular signal transduction"/>
    <property type="evidence" value="ECO:0007669"/>
    <property type="project" value="Ensembl"/>
</dbReference>
<dbReference type="GO" id="GO:0043066">
    <property type="term" value="P:negative regulation of apoptotic process"/>
    <property type="evidence" value="ECO:0000318"/>
    <property type="project" value="GO_Central"/>
</dbReference>
<dbReference type="GO" id="GO:1902176">
    <property type="term" value="P:negative regulation of oxidative stress-induced intrinsic apoptotic signaling pathway"/>
    <property type="evidence" value="ECO:0007669"/>
    <property type="project" value="Ensembl"/>
</dbReference>
<dbReference type="GO" id="GO:0090038">
    <property type="term" value="P:negative regulation of protein kinase C signaling"/>
    <property type="evidence" value="ECO:0007669"/>
    <property type="project" value="Ensembl"/>
</dbReference>
<dbReference type="GO" id="GO:0045766">
    <property type="term" value="P:positive regulation of angiogenesis"/>
    <property type="evidence" value="ECO:0007669"/>
    <property type="project" value="Ensembl"/>
</dbReference>
<dbReference type="GO" id="GO:0043536">
    <property type="term" value="P:positive regulation of blood vessel endothelial cell migration"/>
    <property type="evidence" value="ECO:0007669"/>
    <property type="project" value="Ensembl"/>
</dbReference>
<dbReference type="GO" id="GO:2001028">
    <property type="term" value="P:positive regulation of endothelial cell chemotaxis"/>
    <property type="evidence" value="ECO:0007669"/>
    <property type="project" value="Ensembl"/>
</dbReference>
<dbReference type="GO" id="GO:0032731">
    <property type="term" value="P:positive regulation of interleukin-1 beta production"/>
    <property type="evidence" value="ECO:0007669"/>
    <property type="project" value="Ensembl"/>
</dbReference>
<dbReference type="GO" id="GO:0032760">
    <property type="term" value="P:positive regulation of tumor necrosis factor production"/>
    <property type="evidence" value="ECO:0007669"/>
    <property type="project" value="Ensembl"/>
</dbReference>
<dbReference type="GO" id="GO:0042026">
    <property type="term" value="P:protein refolding"/>
    <property type="evidence" value="ECO:0000318"/>
    <property type="project" value="GO_Central"/>
</dbReference>
<dbReference type="GO" id="GO:0043122">
    <property type="term" value="P:regulation of canonical NF-kappaB signal transduction"/>
    <property type="evidence" value="ECO:0007669"/>
    <property type="project" value="Ensembl"/>
</dbReference>
<dbReference type="GO" id="GO:0001932">
    <property type="term" value="P:regulation of protein phosphorylation"/>
    <property type="evidence" value="ECO:0000250"/>
    <property type="project" value="UniProtKB"/>
</dbReference>
<dbReference type="GO" id="GO:0009408">
    <property type="term" value="P:response to heat"/>
    <property type="evidence" value="ECO:0000318"/>
    <property type="project" value="GO_Central"/>
</dbReference>
<dbReference type="GO" id="GO:0009615">
    <property type="term" value="P:response to virus"/>
    <property type="evidence" value="ECO:0007669"/>
    <property type="project" value="Ensembl"/>
</dbReference>
<dbReference type="GO" id="GO:0048010">
    <property type="term" value="P:vascular endothelial growth factor receptor signaling pathway"/>
    <property type="evidence" value="ECO:0007669"/>
    <property type="project" value="Ensembl"/>
</dbReference>
<dbReference type="CDD" id="cd06475">
    <property type="entry name" value="ACD_HspB1_like"/>
    <property type="match status" value="1"/>
</dbReference>
<dbReference type="FunFam" id="2.60.40.790:FF:000024">
    <property type="entry name" value="heat shock protein beta-1"/>
    <property type="match status" value="1"/>
</dbReference>
<dbReference type="Gene3D" id="2.60.40.790">
    <property type="match status" value="1"/>
</dbReference>
<dbReference type="InterPro" id="IPR002068">
    <property type="entry name" value="A-crystallin/Hsp20_dom"/>
</dbReference>
<dbReference type="InterPro" id="IPR037876">
    <property type="entry name" value="ACD_HspB1"/>
</dbReference>
<dbReference type="InterPro" id="IPR001436">
    <property type="entry name" value="Alpha-crystallin/sHSP_animal"/>
</dbReference>
<dbReference type="InterPro" id="IPR008978">
    <property type="entry name" value="HSP20-like_chaperone"/>
</dbReference>
<dbReference type="PANTHER" id="PTHR45640:SF7">
    <property type="entry name" value="HEAT SHOCK PROTEIN BETA-1"/>
    <property type="match status" value="1"/>
</dbReference>
<dbReference type="PANTHER" id="PTHR45640">
    <property type="entry name" value="HEAT SHOCK PROTEIN HSP-12.2-RELATED"/>
    <property type="match status" value="1"/>
</dbReference>
<dbReference type="Pfam" id="PF00011">
    <property type="entry name" value="HSP20"/>
    <property type="match status" value="1"/>
</dbReference>
<dbReference type="PRINTS" id="PR00299">
    <property type="entry name" value="ACRYSTALLIN"/>
</dbReference>
<dbReference type="SUPFAM" id="SSF49764">
    <property type="entry name" value="HSP20-like chaperones"/>
    <property type="match status" value="1"/>
</dbReference>
<dbReference type="PROSITE" id="PS01031">
    <property type="entry name" value="SHSP"/>
    <property type="match status" value="1"/>
</dbReference>
<reference key="1">
    <citation type="submission" date="2005-08" db="EMBL/GenBank/DDBJ databases">
        <authorList>
            <consortium name="NIH - Mammalian Gene Collection (MGC) project"/>
        </authorList>
    </citation>
    <scope>NUCLEOTIDE SEQUENCE [LARGE SCALE MRNA]</scope>
    <source>
        <strain>Crossbred X Angus</strain>
        <tissue>Ileum</tissue>
    </source>
</reference>
<keyword id="KW-0007">Acetylation</keyword>
<keyword id="KW-0143">Chaperone</keyword>
<keyword id="KW-0963">Cytoplasm</keyword>
<keyword id="KW-0206">Cytoskeleton</keyword>
<keyword id="KW-0488">Methylation</keyword>
<keyword id="KW-0539">Nucleus</keyword>
<keyword id="KW-0597">Phosphoprotein</keyword>
<keyword id="KW-1185">Reference proteome</keyword>
<keyword id="KW-0346">Stress response</keyword>
<proteinExistence type="evidence at transcript level"/>